<reference key="1">
    <citation type="journal article" date="1997" name="Cell. Mol. Life Sci.">
        <title>PCR amplification and cloning of metallothionein complementary DNAs in temperate and Antarctic sea urchin characterized by a large difference in egg metallothionein content.</title>
        <authorList>
            <person name="Scudiero R."/>
            <person name="Capasso C."/>
            <person name="Carginale V."/>
            <person name="Riggio M."/>
            <person name="Capasso A."/>
            <person name="Ciaramella M."/>
            <person name="Filosa S."/>
            <person name="Parisi E."/>
        </authorList>
    </citation>
    <scope>NUCLEOTIDE SEQUENCE [MRNA]</scope>
    <source>
        <tissue>Egg</tissue>
    </source>
</reference>
<keyword id="KW-0479">Metal-binding</keyword>
<keyword id="KW-0480">Metal-thiolate cluster</keyword>
<dbReference type="EMBL" id="Y08621">
    <property type="protein sequence ID" value="CAA69912.1"/>
    <property type="molecule type" value="mRNA"/>
</dbReference>
<dbReference type="SMR" id="P55953"/>
<dbReference type="GO" id="GO:0046872">
    <property type="term" value="F:metal ion binding"/>
    <property type="evidence" value="ECO:0007669"/>
    <property type="project" value="UniProtKB-KW"/>
</dbReference>
<dbReference type="InterPro" id="IPR017980">
    <property type="entry name" value="Metalthion_4_echinoid/annelid"/>
</dbReference>
<dbReference type="InterPro" id="IPR001396">
    <property type="entry name" value="Metalthion_4_echinoidea"/>
</dbReference>
<dbReference type="InterPro" id="IPR017854">
    <property type="entry name" value="Metalthion_dom_sf"/>
</dbReference>
<dbReference type="Pfam" id="PF05522">
    <property type="entry name" value="Metallothio_6"/>
    <property type="match status" value="1"/>
</dbReference>
<dbReference type="PRINTS" id="PR00873">
    <property type="entry name" value="MTECHINOIDEA"/>
</dbReference>
<dbReference type="SUPFAM" id="SSF57868">
    <property type="entry name" value="Metallothionein"/>
    <property type="match status" value="2"/>
</dbReference>
<accession>P55953</accession>
<evidence type="ECO:0000305" key="1"/>
<protein>
    <recommendedName>
        <fullName>Metallothionein</fullName>
        <shortName>MT</shortName>
    </recommendedName>
</protein>
<comment type="function">
    <text>Metallothioneins have a high content of cysteine residues that bind various heavy metals.</text>
</comment>
<comment type="similarity">
    <text evidence="1">Belongs to the metallothionein superfamily. Type 4 family.</text>
</comment>
<proteinExistence type="inferred from homology"/>
<feature type="chain" id="PRO_0000197351" description="Metallothionein">
    <location>
        <begin position="1"/>
        <end position="64"/>
    </location>
</feature>
<name>MT_STENE</name>
<sequence length="64" mass="6429">MPDVKCVCCKEGKECACKGKECCTTGECCKDGTCCGKCTNAACKCADGCKCGSGCSCTEGNCAC</sequence>
<organism>
    <name type="scientific">Sterechinus neumayeri</name>
    <name type="common">Antarctic sea urchin</name>
    <dbReference type="NCBI Taxonomy" id="53479"/>
    <lineage>
        <taxon>Eukaryota</taxon>
        <taxon>Metazoa</taxon>
        <taxon>Echinodermata</taxon>
        <taxon>Eleutherozoa</taxon>
        <taxon>Echinozoa</taxon>
        <taxon>Echinoidea</taxon>
        <taxon>Euechinoidea</taxon>
        <taxon>Echinacea</taxon>
        <taxon>Camarodonta</taxon>
        <taxon>Echinidea</taxon>
        <taxon>Echinidae</taxon>
        <taxon>Sterechinus</taxon>
    </lineage>
</organism>